<feature type="chain" id="PRO_1000122453" description="Homoserine kinase">
    <location>
        <begin position="1"/>
        <end position="322"/>
    </location>
</feature>
<feature type="binding site" evidence="1">
    <location>
        <begin position="107"/>
        <end position="117"/>
    </location>
    <ligand>
        <name>ATP</name>
        <dbReference type="ChEBI" id="CHEBI:30616"/>
    </ligand>
</feature>
<reference key="1">
    <citation type="journal article" date="2010" name="J. Bacteriol.">
        <title>Whole genome sequences of two Xylella fastidiosa strains (M12 and M23) causing almond leaf scorch disease in California.</title>
        <authorList>
            <person name="Chen J."/>
            <person name="Xie G."/>
            <person name="Han S."/>
            <person name="Chertkov O."/>
            <person name="Sims D."/>
            <person name="Civerolo E.L."/>
        </authorList>
    </citation>
    <scope>NUCLEOTIDE SEQUENCE [LARGE SCALE GENOMIC DNA]</scope>
    <source>
        <strain>M12</strain>
    </source>
</reference>
<keyword id="KW-0028">Amino-acid biosynthesis</keyword>
<keyword id="KW-0067">ATP-binding</keyword>
<keyword id="KW-0963">Cytoplasm</keyword>
<keyword id="KW-0418">Kinase</keyword>
<keyword id="KW-0547">Nucleotide-binding</keyword>
<keyword id="KW-0791">Threonine biosynthesis</keyword>
<keyword id="KW-0808">Transferase</keyword>
<dbReference type="EC" id="2.7.1.39" evidence="1"/>
<dbReference type="EMBL" id="CP000941">
    <property type="protein sequence ID" value="ACA12347.1"/>
    <property type="molecule type" value="Genomic_DNA"/>
</dbReference>
<dbReference type="RefSeq" id="WP_004083414.1">
    <property type="nucleotide sequence ID" value="NC_010513.1"/>
</dbReference>
<dbReference type="SMR" id="B0U3B8"/>
<dbReference type="KEGG" id="xfm:Xfasm12_1424"/>
<dbReference type="HOGENOM" id="CLU_041243_1_1_6"/>
<dbReference type="UniPathway" id="UPA00050">
    <property type="reaction ID" value="UER00064"/>
</dbReference>
<dbReference type="GO" id="GO:0005737">
    <property type="term" value="C:cytoplasm"/>
    <property type="evidence" value="ECO:0007669"/>
    <property type="project" value="UniProtKB-SubCell"/>
</dbReference>
<dbReference type="GO" id="GO:0005524">
    <property type="term" value="F:ATP binding"/>
    <property type="evidence" value="ECO:0007669"/>
    <property type="project" value="UniProtKB-UniRule"/>
</dbReference>
<dbReference type="GO" id="GO:0004413">
    <property type="term" value="F:homoserine kinase activity"/>
    <property type="evidence" value="ECO:0007669"/>
    <property type="project" value="UniProtKB-UniRule"/>
</dbReference>
<dbReference type="GO" id="GO:0009088">
    <property type="term" value="P:threonine biosynthetic process"/>
    <property type="evidence" value="ECO:0007669"/>
    <property type="project" value="UniProtKB-UniRule"/>
</dbReference>
<dbReference type="Gene3D" id="3.30.230.10">
    <property type="match status" value="1"/>
</dbReference>
<dbReference type="Gene3D" id="3.30.70.890">
    <property type="entry name" value="GHMP kinase, C-terminal domain"/>
    <property type="match status" value="1"/>
</dbReference>
<dbReference type="HAMAP" id="MF_00384">
    <property type="entry name" value="Homoser_kinase"/>
    <property type="match status" value="1"/>
</dbReference>
<dbReference type="InterPro" id="IPR013750">
    <property type="entry name" value="GHMP_kinase_C_dom"/>
</dbReference>
<dbReference type="InterPro" id="IPR036554">
    <property type="entry name" value="GHMP_kinase_C_sf"/>
</dbReference>
<dbReference type="InterPro" id="IPR006204">
    <property type="entry name" value="GHMP_kinase_N_dom"/>
</dbReference>
<dbReference type="InterPro" id="IPR000870">
    <property type="entry name" value="Homoserine_kinase"/>
</dbReference>
<dbReference type="InterPro" id="IPR020568">
    <property type="entry name" value="Ribosomal_Su5_D2-typ_SF"/>
</dbReference>
<dbReference type="InterPro" id="IPR014721">
    <property type="entry name" value="Ribsml_uS5_D2-typ_fold_subgr"/>
</dbReference>
<dbReference type="NCBIfam" id="NF002288">
    <property type="entry name" value="PRK01212.1-4"/>
    <property type="match status" value="1"/>
</dbReference>
<dbReference type="NCBIfam" id="TIGR00191">
    <property type="entry name" value="thrB"/>
    <property type="match status" value="1"/>
</dbReference>
<dbReference type="PANTHER" id="PTHR20861:SF1">
    <property type="entry name" value="HOMOSERINE KINASE"/>
    <property type="match status" value="1"/>
</dbReference>
<dbReference type="PANTHER" id="PTHR20861">
    <property type="entry name" value="HOMOSERINE/4-DIPHOSPHOCYTIDYL-2-C-METHYL-D-ERYTHRITOL KINASE"/>
    <property type="match status" value="1"/>
</dbReference>
<dbReference type="Pfam" id="PF08544">
    <property type="entry name" value="GHMP_kinases_C"/>
    <property type="match status" value="1"/>
</dbReference>
<dbReference type="Pfam" id="PF00288">
    <property type="entry name" value="GHMP_kinases_N"/>
    <property type="match status" value="1"/>
</dbReference>
<dbReference type="PIRSF" id="PIRSF000676">
    <property type="entry name" value="Homoser_kin"/>
    <property type="match status" value="1"/>
</dbReference>
<dbReference type="PRINTS" id="PR00958">
    <property type="entry name" value="HOMSERKINASE"/>
</dbReference>
<dbReference type="SUPFAM" id="SSF55060">
    <property type="entry name" value="GHMP Kinase, C-terminal domain"/>
    <property type="match status" value="1"/>
</dbReference>
<dbReference type="SUPFAM" id="SSF54211">
    <property type="entry name" value="Ribosomal protein S5 domain 2-like"/>
    <property type="match status" value="1"/>
</dbReference>
<accession>B0U3B8</accession>
<sequence length="322" mass="33806">MNRTLQPDSGASQTAPTAHQARAFAPASVANVAVGFDLLGYPMDQVGDTVTVRRIDTPQVRIAAIRGIAQPLPLQTERNTAGAALLSMHRDLALPFGFELEIDKGIPLSSGMGGSAASCVAALLAANALLDEPLRREHLYRYALDGEAVASGSRHGDNLGPLFLGGLVLCTLERLVPVTVPTAWHSLLVHPDTLLETRRAREVLKEPYLLPDIVTQSANLALVLAGCYHSDAELVRAGLRDVLIEPRRAPLIAGFTAAQQAALQADAMGASISGAGPSVFAWFQTRSAAEAAAPAVRAAFTAAGFDSQAWVTPLTSPGARLL</sequence>
<name>KHSE_XYLFM</name>
<gene>
    <name evidence="1" type="primary">thrB</name>
    <name type="ordered locus">Xfasm12_1424</name>
</gene>
<evidence type="ECO:0000255" key="1">
    <source>
        <dbReference type="HAMAP-Rule" id="MF_00384"/>
    </source>
</evidence>
<protein>
    <recommendedName>
        <fullName evidence="1">Homoserine kinase</fullName>
        <shortName evidence="1">HK</shortName>
        <shortName evidence="1">HSK</shortName>
        <ecNumber evidence="1">2.7.1.39</ecNumber>
    </recommendedName>
</protein>
<proteinExistence type="inferred from homology"/>
<organism>
    <name type="scientific">Xylella fastidiosa (strain M12)</name>
    <dbReference type="NCBI Taxonomy" id="405440"/>
    <lineage>
        <taxon>Bacteria</taxon>
        <taxon>Pseudomonadati</taxon>
        <taxon>Pseudomonadota</taxon>
        <taxon>Gammaproteobacteria</taxon>
        <taxon>Lysobacterales</taxon>
        <taxon>Lysobacteraceae</taxon>
        <taxon>Xylella</taxon>
    </lineage>
</organism>
<comment type="function">
    <text evidence="1">Catalyzes the ATP-dependent phosphorylation of L-homoserine to L-homoserine phosphate.</text>
</comment>
<comment type="catalytic activity">
    <reaction evidence="1">
        <text>L-homoserine + ATP = O-phospho-L-homoserine + ADP + H(+)</text>
        <dbReference type="Rhea" id="RHEA:13985"/>
        <dbReference type="ChEBI" id="CHEBI:15378"/>
        <dbReference type="ChEBI" id="CHEBI:30616"/>
        <dbReference type="ChEBI" id="CHEBI:57476"/>
        <dbReference type="ChEBI" id="CHEBI:57590"/>
        <dbReference type="ChEBI" id="CHEBI:456216"/>
        <dbReference type="EC" id="2.7.1.39"/>
    </reaction>
</comment>
<comment type="pathway">
    <text evidence="1">Amino-acid biosynthesis; L-threonine biosynthesis; L-threonine from L-aspartate: step 4/5.</text>
</comment>
<comment type="subcellular location">
    <subcellularLocation>
        <location evidence="1">Cytoplasm</location>
    </subcellularLocation>
</comment>
<comment type="similarity">
    <text evidence="1">Belongs to the GHMP kinase family. Homoserine kinase subfamily.</text>
</comment>